<accession>A4FBM0</accession>
<sequence length="292" mass="32340">MSEEQTGIEVAVVSGLSGAGRSTAAKCLEDLGWFVVDNLPPELIATMVELGARSSGAITRVAVVMDVRSRAFTEDLGSVIKDLDARGYKPKVLFLEATDEVLIRRFEQVRRGHPLQGEGRLADGIAAERSLLSRLRSEADLVLDTTALSVHQLRAKIEDAFGTEASTRTRVTVLSFGYKYGLPMDADLVMDCRFLPNPFWIPELREFNGLDEEVRNYVLGQEGAEEFLVNYQQLLRLVGAGYHREGKRYLTLALGCTGGKHRSVALVEELARRLADDEGMMVKTVHRDLGRE</sequence>
<protein>
    <recommendedName>
        <fullName evidence="1">Nucleotide-binding protein SACE_2139</fullName>
    </recommendedName>
</protein>
<keyword id="KW-0067">ATP-binding</keyword>
<keyword id="KW-0342">GTP-binding</keyword>
<keyword id="KW-0547">Nucleotide-binding</keyword>
<keyword id="KW-1185">Reference proteome</keyword>
<evidence type="ECO:0000255" key="1">
    <source>
        <dbReference type="HAMAP-Rule" id="MF_00636"/>
    </source>
</evidence>
<gene>
    <name type="ordered locus">SACE_2139</name>
</gene>
<organism>
    <name type="scientific">Saccharopolyspora erythraea (strain ATCC 11635 / DSM 40517 / JCM 4748 / NBRC 13426 / NCIMB 8594 / NRRL 2338)</name>
    <dbReference type="NCBI Taxonomy" id="405948"/>
    <lineage>
        <taxon>Bacteria</taxon>
        <taxon>Bacillati</taxon>
        <taxon>Actinomycetota</taxon>
        <taxon>Actinomycetes</taxon>
        <taxon>Pseudonocardiales</taxon>
        <taxon>Pseudonocardiaceae</taxon>
        <taxon>Saccharopolyspora</taxon>
    </lineage>
</organism>
<name>Y2139_SACEN</name>
<proteinExistence type="inferred from homology"/>
<feature type="chain" id="PRO_0000383284" description="Nucleotide-binding protein SACE_2139">
    <location>
        <begin position="1"/>
        <end position="292"/>
    </location>
</feature>
<feature type="binding site" evidence="1">
    <location>
        <begin position="15"/>
        <end position="22"/>
    </location>
    <ligand>
        <name>ATP</name>
        <dbReference type="ChEBI" id="CHEBI:30616"/>
    </ligand>
</feature>
<feature type="binding site" evidence="1">
    <location>
        <begin position="66"/>
        <end position="69"/>
    </location>
    <ligand>
        <name>GTP</name>
        <dbReference type="ChEBI" id="CHEBI:37565"/>
    </ligand>
</feature>
<comment type="function">
    <text evidence="1">Displays ATPase and GTPase activities.</text>
</comment>
<comment type="similarity">
    <text evidence="1">Belongs to the RapZ-like family.</text>
</comment>
<dbReference type="EMBL" id="AM420293">
    <property type="protein sequence ID" value="CAM01445.1"/>
    <property type="molecule type" value="Genomic_DNA"/>
</dbReference>
<dbReference type="RefSeq" id="WP_009942981.1">
    <property type="nucleotide sequence ID" value="NC_009142.1"/>
</dbReference>
<dbReference type="SMR" id="A4FBM0"/>
<dbReference type="STRING" id="405948.SACE_2139"/>
<dbReference type="KEGG" id="sen:SACE_2139"/>
<dbReference type="eggNOG" id="COG1660">
    <property type="taxonomic scope" value="Bacteria"/>
</dbReference>
<dbReference type="HOGENOM" id="CLU_059558_0_0_11"/>
<dbReference type="OrthoDB" id="9784461at2"/>
<dbReference type="Proteomes" id="UP000006728">
    <property type="component" value="Chromosome"/>
</dbReference>
<dbReference type="GO" id="GO:0005524">
    <property type="term" value="F:ATP binding"/>
    <property type="evidence" value="ECO:0007669"/>
    <property type="project" value="UniProtKB-UniRule"/>
</dbReference>
<dbReference type="GO" id="GO:0005525">
    <property type="term" value="F:GTP binding"/>
    <property type="evidence" value="ECO:0007669"/>
    <property type="project" value="UniProtKB-UniRule"/>
</dbReference>
<dbReference type="Gene3D" id="3.40.50.300">
    <property type="entry name" value="P-loop containing nucleotide triphosphate hydrolases"/>
    <property type="match status" value="1"/>
</dbReference>
<dbReference type="HAMAP" id="MF_00636">
    <property type="entry name" value="RapZ_like"/>
    <property type="match status" value="1"/>
</dbReference>
<dbReference type="InterPro" id="IPR027417">
    <property type="entry name" value="P-loop_NTPase"/>
</dbReference>
<dbReference type="InterPro" id="IPR005337">
    <property type="entry name" value="RapZ-like"/>
</dbReference>
<dbReference type="InterPro" id="IPR053930">
    <property type="entry name" value="RapZ-like_N"/>
</dbReference>
<dbReference type="InterPro" id="IPR053931">
    <property type="entry name" value="RapZ_C"/>
</dbReference>
<dbReference type="NCBIfam" id="NF003828">
    <property type="entry name" value="PRK05416.1"/>
    <property type="match status" value="1"/>
</dbReference>
<dbReference type="PANTHER" id="PTHR30448">
    <property type="entry name" value="RNASE ADAPTER PROTEIN RAPZ"/>
    <property type="match status" value="1"/>
</dbReference>
<dbReference type="PANTHER" id="PTHR30448:SF0">
    <property type="entry name" value="RNASE ADAPTER PROTEIN RAPZ"/>
    <property type="match status" value="1"/>
</dbReference>
<dbReference type="Pfam" id="PF22740">
    <property type="entry name" value="PapZ_C"/>
    <property type="match status" value="1"/>
</dbReference>
<dbReference type="Pfam" id="PF03668">
    <property type="entry name" value="RapZ-like_N"/>
    <property type="match status" value="1"/>
</dbReference>
<dbReference type="PIRSF" id="PIRSF005052">
    <property type="entry name" value="P-loopkin"/>
    <property type="match status" value="1"/>
</dbReference>
<dbReference type="SUPFAM" id="SSF52540">
    <property type="entry name" value="P-loop containing nucleoside triphosphate hydrolases"/>
    <property type="match status" value="1"/>
</dbReference>
<reference key="1">
    <citation type="journal article" date="2007" name="Nat. Biotechnol.">
        <title>Complete genome sequence of the erythromycin-producing bacterium Saccharopolyspora erythraea NRRL23338.</title>
        <authorList>
            <person name="Oliynyk M."/>
            <person name="Samborskyy M."/>
            <person name="Lester J.B."/>
            <person name="Mironenko T."/>
            <person name="Scott N."/>
            <person name="Dickens S."/>
            <person name="Haydock S.F."/>
            <person name="Leadlay P.F."/>
        </authorList>
    </citation>
    <scope>NUCLEOTIDE SEQUENCE [LARGE SCALE GENOMIC DNA]</scope>
    <source>
        <strain>ATCC 11635 / DSM 40517 / JCM 4748 / NBRC 13426 / NCIMB 8594 / NRRL 2338</strain>
    </source>
</reference>